<keyword id="KW-0007">Acetylation</keyword>
<keyword id="KW-0963">Cytoplasm</keyword>
<keyword id="KW-1017">Isopeptide bond</keyword>
<keyword id="KW-0539">Nucleus</keyword>
<keyword id="KW-1185">Reference proteome</keyword>
<keyword id="KW-0687">Ribonucleoprotein</keyword>
<keyword id="KW-0689">Ribosomal protein</keyword>
<keyword id="KW-0694">RNA-binding</keyword>
<keyword id="KW-0699">rRNA-binding</keyword>
<keyword id="KW-0832">Ubl conjugation</keyword>
<proteinExistence type="evidence at transcript level"/>
<comment type="function">
    <text evidence="1">Component of the small ribosomal subunit. The ribosome is a large ribonucleoprotein complex responsible for the synthesis of proteins in the cell. Part of the small subunit (SSU) processome, first precursor of the small eukaryotic ribosomal subunit. During the assembly of the SSU processome in the nucleolus, many ribosome biogenesis factors, an RNA chaperone and ribosomal proteins associate with the nascent pre-rRNA and work in concert to generate RNA folding, modifications, rearrangements and cleavage as well as targeted degradation of pre-ribosomal RNA by the RNA exosome.</text>
</comment>
<comment type="subunit">
    <text evidence="1">Component of the small ribosomal subunit. Part of the small subunit (SSU) processome, composed of more than 70 proteins and the RNA chaperone small nucleolar RNA (snoRNA) U3. Identified in a IGF2BP1-dependent mRNP granule complex containing untranslated mRNAs.</text>
</comment>
<comment type="subcellular location">
    <subcellularLocation>
        <location evidence="1">Cytoplasm</location>
    </subcellularLocation>
    <subcellularLocation>
        <location evidence="1">Nucleus</location>
        <location evidence="1">Nucleolus</location>
    </subcellularLocation>
    <text evidence="1">Localized in cytoplasmic mRNP granules containing untranslated mRNAs.</text>
</comment>
<comment type="similarity">
    <text evidence="3">Belongs to the eukaryotic ribosomal protein eS4 family.</text>
</comment>
<evidence type="ECO:0000250" key="1">
    <source>
        <dbReference type="UniProtKB" id="P62701"/>
    </source>
</evidence>
<evidence type="ECO:0000250" key="2">
    <source>
        <dbReference type="UniProtKB" id="P62702"/>
    </source>
</evidence>
<evidence type="ECO:0000305" key="3"/>
<protein>
    <recommendedName>
        <fullName evidence="3">Small ribosomal subunit protein eS4</fullName>
    </recommendedName>
    <alternativeName>
        <fullName>40S ribosomal protein S4, X isoform</fullName>
    </alternativeName>
</protein>
<accession>P62704</accession>
<accession>P12631</accession>
<accession>P12750</accession>
<accession>P27576</accession>
<accession>P55831</accession>
<accession>Q14727</accession>
<name>RS4X_MESAU</name>
<gene>
    <name type="primary">RPS4X</name>
</gene>
<organism>
    <name type="scientific">Mesocricetus auratus</name>
    <name type="common">Golden hamster</name>
    <dbReference type="NCBI Taxonomy" id="10036"/>
    <lineage>
        <taxon>Eukaryota</taxon>
        <taxon>Metazoa</taxon>
        <taxon>Chordata</taxon>
        <taxon>Craniata</taxon>
        <taxon>Vertebrata</taxon>
        <taxon>Euteleostomi</taxon>
        <taxon>Mammalia</taxon>
        <taxon>Eutheria</taxon>
        <taxon>Euarchontoglires</taxon>
        <taxon>Glires</taxon>
        <taxon>Rodentia</taxon>
        <taxon>Myomorpha</taxon>
        <taxon>Muroidea</taxon>
        <taxon>Cricetidae</taxon>
        <taxon>Cricetinae</taxon>
        <taxon>Mesocricetus</taxon>
    </lineage>
</organism>
<feature type="initiator methionine" description="Removed" evidence="1">
    <location>
        <position position="1"/>
    </location>
</feature>
<feature type="chain" id="PRO_0000130807" description="Small ribosomal subunit protein eS4">
    <location>
        <begin position="2"/>
        <end position="263"/>
    </location>
</feature>
<feature type="domain" description="S4 RNA-binding">
    <location>
        <begin position="42"/>
        <end position="104"/>
    </location>
</feature>
<feature type="modified residue" description="N6-acetyllysine" evidence="2">
    <location>
        <position position="233"/>
    </location>
</feature>
<feature type="cross-link" description="Glycyl lysine isopeptide (Lys-Gly) (interchain with G-Cter in SUMO2)" evidence="1">
    <location>
        <position position="230"/>
    </location>
</feature>
<reference key="1">
    <citation type="journal article" date="1993" name="Nat. Genet.">
        <title>Functional equivalence of human X- and Y-encoded isoforms of ribosomal protein S4 consistent with a role in Turner syndrome.</title>
        <authorList>
            <person name="Watanabe M."/>
            <person name="Zinn A.R."/>
            <person name="Page D.C."/>
            <person name="Nishimoto T."/>
        </authorList>
    </citation>
    <scope>NUCLEOTIDE SEQUENCE [MRNA]</scope>
</reference>
<dbReference type="EMBL" id="D11087">
    <property type="protein sequence ID" value="BAA01858.1"/>
    <property type="molecule type" value="mRNA"/>
</dbReference>
<dbReference type="RefSeq" id="XP_005081267.1">
    <property type="nucleotide sequence ID" value="XM_005081210.2"/>
</dbReference>
<dbReference type="SMR" id="P62704"/>
<dbReference type="STRING" id="10036.ENSMAUP00000013096"/>
<dbReference type="Ensembl" id="ENSMAUT00000017005">
    <property type="protein sequence ID" value="ENSMAUP00000013096"/>
    <property type="gene ID" value="ENSMAUG00000013223"/>
</dbReference>
<dbReference type="GeneID" id="101829735"/>
<dbReference type="KEGG" id="maua:101829735"/>
<dbReference type="CTD" id="6191"/>
<dbReference type="eggNOG" id="KOG0378">
    <property type="taxonomic scope" value="Eukaryota"/>
</dbReference>
<dbReference type="OrthoDB" id="1109245at2759"/>
<dbReference type="Proteomes" id="UP000189706">
    <property type="component" value="Unplaced"/>
</dbReference>
<dbReference type="GO" id="GO:0022627">
    <property type="term" value="C:cytosolic small ribosomal subunit"/>
    <property type="evidence" value="ECO:0007669"/>
    <property type="project" value="TreeGrafter"/>
</dbReference>
<dbReference type="GO" id="GO:0005730">
    <property type="term" value="C:nucleolus"/>
    <property type="evidence" value="ECO:0007669"/>
    <property type="project" value="UniProtKB-SubCell"/>
</dbReference>
<dbReference type="GO" id="GO:1990904">
    <property type="term" value="C:ribonucleoprotein complex"/>
    <property type="evidence" value="ECO:0000250"/>
    <property type="project" value="UniProtKB"/>
</dbReference>
<dbReference type="GO" id="GO:0005840">
    <property type="term" value="C:ribosome"/>
    <property type="evidence" value="ECO:0000250"/>
    <property type="project" value="UniProtKB"/>
</dbReference>
<dbReference type="GO" id="GO:0032040">
    <property type="term" value="C:small-subunit processome"/>
    <property type="evidence" value="ECO:0000250"/>
    <property type="project" value="UniProtKB"/>
</dbReference>
<dbReference type="GO" id="GO:0019843">
    <property type="term" value="F:rRNA binding"/>
    <property type="evidence" value="ECO:0007669"/>
    <property type="project" value="UniProtKB-KW"/>
</dbReference>
<dbReference type="GO" id="GO:0003735">
    <property type="term" value="F:structural constituent of ribosome"/>
    <property type="evidence" value="ECO:0007669"/>
    <property type="project" value="InterPro"/>
</dbReference>
<dbReference type="GO" id="GO:0042274">
    <property type="term" value="P:ribosomal small subunit biogenesis"/>
    <property type="evidence" value="ECO:0000250"/>
    <property type="project" value="UniProtKB"/>
</dbReference>
<dbReference type="GO" id="GO:0006412">
    <property type="term" value="P:translation"/>
    <property type="evidence" value="ECO:0007669"/>
    <property type="project" value="InterPro"/>
</dbReference>
<dbReference type="CDD" id="cd06087">
    <property type="entry name" value="KOW_RPS4"/>
    <property type="match status" value="1"/>
</dbReference>
<dbReference type="CDD" id="cd00165">
    <property type="entry name" value="S4"/>
    <property type="match status" value="1"/>
</dbReference>
<dbReference type="FunFam" id="2.30.30.30:FF:000005">
    <property type="entry name" value="40S ribosomal protein S4"/>
    <property type="match status" value="1"/>
</dbReference>
<dbReference type="FunFam" id="2.40.50.740:FF:000001">
    <property type="entry name" value="40S ribosomal protein S4"/>
    <property type="match status" value="1"/>
</dbReference>
<dbReference type="FunFam" id="3.10.290.10:FF:000051">
    <property type="entry name" value="40S ribosomal protein S4, X isoform"/>
    <property type="match status" value="1"/>
</dbReference>
<dbReference type="Gene3D" id="2.30.30.30">
    <property type="match status" value="1"/>
</dbReference>
<dbReference type="Gene3D" id="2.40.50.740">
    <property type="match status" value="1"/>
</dbReference>
<dbReference type="Gene3D" id="3.10.290.10">
    <property type="entry name" value="RNA-binding S4 domain"/>
    <property type="match status" value="1"/>
</dbReference>
<dbReference type="HAMAP" id="MF_00485">
    <property type="entry name" value="Ribosomal_eS4"/>
    <property type="match status" value="1"/>
</dbReference>
<dbReference type="InterPro" id="IPR005824">
    <property type="entry name" value="KOW"/>
</dbReference>
<dbReference type="InterPro" id="IPR014722">
    <property type="entry name" value="Rib_uL2_dom2"/>
</dbReference>
<dbReference type="InterPro" id="IPR000876">
    <property type="entry name" value="Ribosomal_eS4"/>
</dbReference>
<dbReference type="InterPro" id="IPR032277">
    <property type="entry name" value="Ribosomal_eS4_C"/>
</dbReference>
<dbReference type="InterPro" id="IPR013845">
    <property type="entry name" value="Ribosomal_eS4_central_region"/>
</dbReference>
<dbReference type="InterPro" id="IPR038237">
    <property type="entry name" value="Ribosomal_eS4_central_sf"/>
</dbReference>
<dbReference type="InterPro" id="IPR041982">
    <property type="entry name" value="Ribosomal_eS4_KOW"/>
</dbReference>
<dbReference type="InterPro" id="IPR013843">
    <property type="entry name" value="Ribosomal_eS4_N"/>
</dbReference>
<dbReference type="InterPro" id="IPR018199">
    <property type="entry name" value="Ribosomal_eS4_N_CS"/>
</dbReference>
<dbReference type="InterPro" id="IPR002942">
    <property type="entry name" value="S4_RNA-bd"/>
</dbReference>
<dbReference type="InterPro" id="IPR036986">
    <property type="entry name" value="S4_RNA-bd_sf"/>
</dbReference>
<dbReference type="PANTHER" id="PTHR11581">
    <property type="entry name" value="30S/40S RIBOSOMAL PROTEIN S4"/>
    <property type="match status" value="1"/>
</dbReference>
<dbReference type="PANTHER" id="PTHR11581:SF0">
    <property type="entry name" value="SMALL RIBOSOMAL SUBUNIT PROTEIN ES4"/>
    <property type="match status" value="1"/>
</dbReference>
<dbReference type="Pfam" id="PF16121">
    <property type="entry name" value="40S_S4_C"/>
    <property type="match status" value="1"/>
</dbReference>
<dbReference type="Pfam" id="PF00467">
    <property type="entry name" value="KOW"/>
    <property type="match status" value="1"/>
</dbReference>
<dbReference type="Pfam" id="PF00900">
    <property type="entry name" value="Ribosomal_S4e"/>
    <property type="match status" value="1"/>
</dbReference>
<dbReference type="Pfam" id="PF08071">
    <property type="entry name" value="RS4NT"/>
    <property type="match status" value="1"/>
</dbReference>
<dbReference type="PIRSF" id="PIRSF002116">
    <property type="entry name" value="Ribosomal_S4"/>
    <property type="match status" value="1"/>
</dbReference>
<dbReference type="SMART" id="SM00363">
    <property type="entry name" value="S4"/>
    <property type="match status" value="1"/>
</dbReference>
<dbReference type="PROSITE" id="PS00528">
    <property type="entry name" value="RIBOSOMAL_S4E"/>
    <property type="match status" value="1"/>
</dbReference>
<dbReference type="PROSITE" id="PS50889">
    <property type="entry name" value="S4"/>
    <property type="match status" value="1"/>
</dbReference>
<sequence length="263" mass="29598">MARGPKKHLKRVAAPKHWMLDKLTGVFAPRPSTGPHKLRECLPLIIFLRNRLKYALTGDEVKKICMQRFIKIDGKVRTDITYPAGFMDVISIDKTGENFRLIYDTKGRFAVHRITPEEAKYKLCKVRKIFVGTKGIPHLVTHDARTIRYPDPLIKVNDTIQIDLETGKITDFIKFDTGNLCMVTGGANLGRIGVITNRERHPGSFDVVHVKDANGNSFATRLSNIFVIGKGNKPWISLPRGKGIRLTIAEERDKRLAAKQSSG</sequence>